<proteinExistence type="inferred from homology"/>
<dbReference type="EC" id="4.1.99.22" evidence="1"/>
<dbReference type="EMBL" id="CU928163">
    <property type="protein sequence ID" value="CAR12133.1"/>
    <property type="molecule type" value="Genomic_DNA"/>
</dbReference>
<dbReference type="RefSeq" id="WP_001305603.1">
    <property type="nucleotide sequence ID" value="NC_011751.1"/>
</dbReference>
<dbReference type="RefSeq" id="YP_002411678.1">
    <property type="nucleotide sequence ID" value="NC_011751.1"/>
</dbReference>
<dbReference type="SMR" id="B7NA81"/>
<dbReference type="STRING" id="585056.ECUMN_0924"/>
<dbReference type="KEGG" id="eum:ECUMN_0924"/>
<dbReference type="PATRIC" id="fig|585056.7.peg.1118"/>
<dbReference type="HOGENOM" id="CLU_009273_0_1_6"/>
<dbReference type="UniPathway" id="UPA00344"/>
<dbReference type="Proteomes" id="UP000007097">
    <property type="component" value="Chromosome"/>
</dbReference>
<dbReference type="GO" id="GO:0051539">
    <property type="term" value="F:4 iron, 4 sulfur cluster binding"/>
    <property type="evidence" value="ECO:0007669"/>
    <property type="project" value="UniProtKB-UniRule"/>
</dbReference>
<dbReference type="GO" id="GO:0061799">
    <property type="term" value="F:cyclic pyranopterin monophosphate synthase activity"/>
    <property type="evidence" value="ECO:0007669"/>
    <property type="project" value="TreeGrafter"/>
</dbReference>
<dbReference type="GO" id="GO:0061798">
    <property type="term" value="F:GTP 3',8'-cyclase activity"/>
    <property type="evidence" value="ECO:0007669"/>
    <property type="project" value="UniProtKB-UniRule"/>
</dbReference>
<dbReference type="GO" id="GO:0005525">
    <property type="term" value="F:GTP binding"/>
    <property type="evidence" value="ECO:0007669"/>
    <property type="project" value="UniProtKB-UniRule"/>
</dbReference>
<dbReference type="GO" id="GO:0046872">
    <property type="term" value="F:metal ion binding"/>
    <property type="evidence" value="ECO:0007669"/>
    <property type="project" value="UniProtKB-KW"/>
</dbReference>
<dbReference type="GO" id="GO:1904047">
    <property type="term" value="F:S-adenosyl-L-methionine binding"/>
    <property type="evidence" value="ECO:0007669"/>
    <property type="project" value="UniProtKB-UniRule"/>
</dbReference>
<dbReference type="GO" id="GO:0006777">
    <property type="term" value="P:Mo-molybdopterin cofactor biosynthetic process"/>
    <property type="evidence" value="ECO:0007669"/>
    <property type="project" value="UniProtKB-UniRule"/>
</dbReference>
<dbReference type="CDD" id="cd01335">
    <property type="entry name" value="Radical_SAM"/>
    <property type="match status" value="1"/>
</dbReference>
<dbReference type="CDD" id="cd21117">
    <property type="entry name" value="Twitch_MoaA"/>
    <property type="match status" value="1"/>
</dbReference>
<dbReference type="FunFam" id="3.20.20.70:FF:000057">
    <property type="entry name" value="GTP 3',8-cyclase"/>
    <property type="match status" value="1"/>
</dbReference>
<dbReference type="Gene3D" id="3.20.20.70">
    <property type="entry name" value="Aldolase class I"/>
    <property type="match status" value="1"/>
</dbReference>
<dbReference type="HAMAP" id="MF_01225_B">
    <property type="entry name" value="MoaA_B"/>
    <property type="match status" value="1"/>
</dbReference>
<dbReference type="InterPro" id="IPR013785">
    <property type="entry name" value="Aldolase_TIM"/>
</dbReference>
<dbReference type="InterPro" id="IPR006638">
    <property type="entry name" value="Elp3/MiaA/NifB-like_rSAM"/>
</dbReference>
<dbReference type="InterPro" id="IPR013483">
    <property type="entry name" value="MoaA"/>
</dbReference>
<dbReference type="InterPro" id="IPR000385">
    <property type="entry name" value="MoaA_NifB_PqqE_Fe-S-bd_CS"/>
</dbReference>
<dbReference type="InterPro" id="IPR010505">
    <property type="entry name" value="MoaA_twitch"/>
</dbReference>
<dbReference type="InterPro" id="IPR050105">
    <property type="entry name" value="MoCo_biosynth_MoaA/MoaC"/>
</dbReference>
<dbReference type="InterPro" id="IPR007197">
    <property type="entry name" value="rSAM"/>
</dbReference>
<dbReference type="NCBIfam" id="TIGR02666">
    <property type="entry name" value="moaA"/>
    <property type="match status" value="1"/>
</dbReference>
<dbReference type="PANTHER" id="PTHR22960:SF28">
    <property type="entry name" value="GTP 3',8-CYCLASE"/>
    <property type="match status" value="1"/>
</dbReference>
<dbReference type="PANTHER" id="PTHR22960">
    <property type="entry name" value="MOLYBDOPTERIN COFACTOR SYNTHESIS PROTEIN A"/>
    <property type="match status" value="1"/>
</dbReference>
<dbReference type="Pfam" id="PF13353">
    <property type="entry name" value="Fer4_12"/>
    <property type="match status" value="1"/>
</dbReference>
<dbReference type="Pfam" id="PF06463">
    <property type="entry name" value="Mob_synth_C"/>
    <property type="match status" value="1"/>
</dbReference>
<dbReference type="Pfam" id="PF04055">
    <property type="entry name" value="Radical_SAM"/>
    <property type="match status" value="1"/>
</dbReference>
<dbReference type="SFLD" id="SFLDG01383">
    <property type="entry name" value="cyclic_pyranopterin_phosphate"/>
    <property type="match status" value="1"/>
</dbReference>
<dbReference type="SFLD" id="SFLDG01072">
    <property type="entry name" value="dehydrogenase_like"/>
    <property type="match status" value="1"/>
</dbReference>
<dbReference type="SMART" id="SM00729">
    <property type="entry name" value="Elp3"/>
    <property type="match status" value="1"/>
</dbReference>
<dbReference type="SUPFAM" id="SSF102114">
    <property type="entry name" value="Radical SAM enzymes"/>
    <property type="match status" value="1"/>
</dbReference>
<dbReference type="PROSITE" id="PS01305">
    <property type="entry name" value="MOAA_NIFB_PQQE"/>
    <property type="match status" value="1"/>
</dbReference>
<dbReference type="PROSITE" id="PS51918">
    <property type="entry name" value="RADICAL_SAM"/>
    <property type="match status" value="1"/>
</dbReference>
<sequence length="329" mass="37320">MASQLTDAFARKYYYLRLSITDVCNFRCTYCLPDGYKPSGVTNKGFLTVDEIRRVTRAFASLGTEKVRLTGGEPSLRRDFTDIIAAVRENDAIRQIAVTTNGYRLERDVANWRDAGLTGINVSVDSLDARQFHAITGQDKFNQVMAGIDAAFEAGFEKVKVNTVLMRDVNHHQLDTFLNWIQHRPIQLRFIELMETGEGSELFRKHHISGQVLRDELLRRGWIHQLRQRSDGPAQVFCHPDYAGEIGLIMPYEKDFCATCNRLRVSSIGKLHLCLFGEGGVNLRDLLEDDTQQQALEARISAALREKKQTHFLHQNNTGITQNLSYIGG</sequence>
<reference key="1">
    <citation type="journal article" date="2009" name="PLoS Genet.">
        <title>Organised genome dynamics in the Escherichia coli species results in highly diverse adaptive paths.</title>
        <authorList>
            <person name="Touchon M."/>
            <person name="Hoede C."/>
            <person name="Tenaillon O."/>
            <person name="Barbe V."/>
            <person name="Baeriswyl S."/>
            <person name="Bidet P."/>
            <person name="Bingen E."/>
            <person name="Bonacorsi S."/>
            <person name="Bouchier C."/>
            <person name="Bouvet O."/>
            <person name="Calteau A."/>
            <person name="Chiapello H."/>
            <person name="Clermont O."/>
            <person name="Cruveiller S."/>
            <person name="Danchin A."/>
            <person name="Diard M."/>
            <person name="Dossat C."/>
            <person name="Karoui M.E."/>
            <person name="Frapy E."/>
            <person name="Garry L."/>
            <person name="Ghigo J.M."/>
            <person name="Gilles A.M."/>
            <person name="Johnson J."/>
            <person name="Le Bouguenec C."/>
            <person name="Lescat M."/>
            <person name="Mangenot S."/>
            <person name="Martinez-Jehanne V."/>
            <person name="Matic I."/>
            <person name="Nassif X."/>
            <person name="Oztas S."/>
            <person name="Petit M.A."/>
            <person name="Pichon C."/>
            <person name="Rouy Z."/>
            <person name="Ruf C.S."/>
            <person name="Schneider D."/>
            <person name="Tourret J."/>
            <person name="Vacherie B."/>
            <person name="Vallenet D."/>
            <person name="Medigue C."/>
            <person name="Rocha E.P.C."/>
            <person name="Denamur E."/>
        </authorList>
    </citation>
    <scope>NUCLEOTIDE SEQUENCE [LARGE SCALE GENOMIC DNA]</scope>
    <source>
        <strain>UMN026 / ExPEC</strain>
    </source>
</reference>
<gene>
    <name evidence="1" type="primary">moaA</name>
    <name type="ordered locus">ECUMN_0924</name>
</gene>
<evidence type="ECO:0000255" key="1">
    <source>
        <dbReference type="HAMAP-Rule" id="MF_01225"/>
    </source>
</evidence>
<evidence type="ECO:0000255" key="2">
    <source>
        <dbReference type="PROSITE-ProRule" id="PRU01266"/>
    </source>
</evidence>
<protein>
    <recommendedName>
        <fullName evidence="1">GTP 3',8-cyclase</fullName>
        <ecNumber evidence="1">4.1.99.22</ecNumber>
    </recommendedName>
    <alternativeName>
        <fullName evidence="1">Molybdenum cofactor biosynthesis protein A</fullName>
    </alternativeName>
</protein>
<comment type="function">
    <text evidence="1">Catalyzes the cyclization of GTP to (8S)-3',8-cyclo-7,8-dihydroguanosine 5'-triphosphate.</text>
</comment>
<comment type="catalytic activity">
    <reaction evidence="1">
        <text>GTP + AH2 + S-adenosyl-L-methionine = (8S)-3',8-cyclo-7,8-dihydroguanosine 5'-triphosphate + 5'-deoxyadenosine + L-methionine + A + H(+)</text>
        <dbReference type="Rhea" id="RHEA:49576"/>
        <dbReference type="ChEBI" id="CHEBI:13193"/>
        <dbReference type="ChEBI" id="CHEBI:15378"/>
        <dbReference type="ChEBI" id="CHEBI:17319"/>
        <dbReference type="ChEBI" id="CHEBI:17499"/>
        <dbReference type="ChEBI" id="CHEBI:37565"/>
        <dbReference type="ChEBI" id="CHEBI:57844"/>
        <dbReference type="ChEBI" id="CHEBI:59789"/>
        <dbReference type="ChEBI" id="CHEBI:131766"/>
        <dbReference type="EC" id="4.1.99.22"/>
    </reaction>
</comment>
<comment type="cofactor">
    <cofactor evidence="1">
        <name>[4Fe-4S] cluster</name>
        <dbReference type="ChEBI" id="CHEBI:49883"/>
    </cofactor>
    <text evidence="1">Binds 2 [4Fe-4S] clusters. Binds 1 [4Fe-4S] cluster coordinated with 3 cysteines and an exchangeable S-adenosyl-L-methionine and 1 [4Fe-4S] cluster coordinated with 3 cysteines and the GTP-derived substrate.</text>
</comment>
<comment type="pathway">
    <text evidence="1">Cofactor biosynthesis; molybdopterin biosynthesis.</text>
</comment>
<comment type="subunit">
    <text evidence="1">Monomer and homodimer.</text>
</comment>
<comment type="similarity">
    <text evidence="1">Belongs to the radical SAM superfamily. MoaA family.</text>
</comment>
<organism>
    <name type="scientific">Escherichia coli O17:K52:H18 (strain UMN026 / ExPEC)</name>
    <dbReference type="NCBI Taxonomy" id="585056"/>
    <lineage>
        <taxon>Bacteria</taxon>
        <taxon>Pseudomonadati</taxon>
        <taxon>Pseudomonadota</taxon>
        <taxon>Gammaproteobacteria</taxon>
        <taxon>Enterobacterales</taxon>
        <taxon>Enterobacteriaceae</taxon>
        <taxon>Escherichia</taxon>
    </lineage>
</organism>
<keyword id="KW-0004">4Fe-4S</keyword>
<keyword id="KW-0342">GTP-binding</keyword>
<keyword id="KW-0408">Iron</keyword>
<keyword id="KW-0411">Iron-sulfur</keyword>
<keyword id="KW-0456">Lyase</keyword>
<keyword id="KW-0479">Metal-binding</keyword>
<keyword id="KW-0501">Molybdenum cofactor biosynthesis</keyword>
<keyword id="KW-0547">Nucleotide-binding</keyword>
<keyword id="KW-0949">S-adenosyl-L-methionine</keyword>
<feature type="chain" id="PRO_1000139323" description="GTP 3',8-cyclase">
    <location>
        <begin position="1"/>
        <end position="329"/>
    </location>
</feature>
<feature type="domain" description="Radical SAM core" evidence="2">
    <location>
        <begin position="8"/>
        <end position="234"/>
    </location>
</feature>
<feature type="binding site" evidence="1">
    <location>
        <position position="17"/>
    </location>
    <ligand>
        <name>GTP</name>
        <dbReference type="ChEBI" id="CHEBI:37565"/>
    </ligand>
</feature>
<feature type="binding site" evidence="1">
    <location>
        <position position="24"/>
    </location>
    <ligand>
        <name>[4Fe-4S] cluster</name>
        <dbReference type="ChEBI" id="CHEBI:49883"/>
        <label>1</label>
        <note>4Fe-4S-S-AdoMet</note>
    </ligand>
</feature>
<feature type="binding site" evidence="1">
    <location>
        <position position="28"/>
    </location>
    <ligand>
        <name>[4Fe-4S] cluster</name>
        <dbReference type="ChEBI" id="CHEBI:49883"/>
        <label>1</label>
        <note>4Fe-4S-S-AdoMet</note>
    </ligand>
</feature>
<feature type="binding site" evidence="1">
    <location>
        <position position="30"/>
    </location>
    <ligand>
        <name>S-adenosyl-L-methionine</name>
        <dbReference type="ChEBI" id="CHEBI:59789"/>
    </ligand>
</feature>
<feature type="binding site" evidence="1">
    <location>
        <position position="31"/>
    </location>
    <ligand>
        <name>[4Fe-4S] cluster</name>
        <dbReference type="ChEBI" id="CHEBI:49883"/>
        <label>1</label>
        <note>4Fe-4S-S-AdoMet</note>
    </ligand>
</feature>
<feature type="binding site" evidence="1">
    <location>
        <position position="68"/>
    </location>
    <ligand>
        <name>GTP</name>
        <dbReference type="ChEBI" id="CHEBI:37565"/>
    </ligand>
</feature>
<feature type="binding site" evidence="1">
    <location>
        <position position="72"/>
    </location>
    <ligand>
        <name>S-adenosyl-L-methionine</name>
        <dbReference type="ChEBI" id="CHEBI:59789"/>
    </ligand>
</feature>
<feature type="binding site" evidence="1">
    <location>
        <position position="99"/>
    </location>
    <ligand>
        <name>GTP</name>
        <dbReference type="ChEBI" id="CHEBI:37565"/>
    </ligand>
</feature>
<feature type="binding site" evidence="1">
    <location>
        <position position="123"/>
    </location>
    <ligand>
        <name>S-adenosyl-L-methionine</name>
        <dbReference type="ChEBI" id="CHEBI:59789"/>
    </ligand>
</feature>
<feature type="binding site" evidence="1">
    <location>
        <position position="160"/>
    </location>
    <ligand>
        <name>GTP</name>
        <dbReference type="ChEBI" id="CHEBI:37565"/>
    </ligand>
</feature>
<feature type="binding site" evidence="1">
    <location>
        <position position="194"/>
    </location>
    <ligand>
        <name>S-adenosyl-L-methionine</name>
        <dbReference type="ChEBI" id="CHEBI:59789"/>
    </ligand>
</feature>
<feature type="binding site" evidence="1">
    <location>
        <position position="257"/>
    </location>
    <ligand>
        <name>[4Fe-4S] cluster</name>
        <dbReference type="ChEBI" id="CHEBI:49883"/>
        <label>2</label>
        <note>4Fe-4S-substrate</note>
    </ligand>
</feature>
<feature type="binding site" evidence="1">
    <location>
        <position position="260"/>
    </location>
    <ligand>
        <name>[4Fe-4S] cluster</name>
        <dbReference type="ChEBI" id="CHEBI:49883"/>
        <label>2</label>
        <note>4Fe-4S-substrate</note>
    </ligand>
</feature>
<feature type="binding site" evidence="1">
    <location>
        <begin position="262"/>
        <end position="264"/>
    </location>
    <ligand>
        <name>GTP</name>
        <dbReference type="ChEBI" id="CHEBI:37565"/>
    </ligand>
</feature>
<feature type="binding site" evidence="1">
    <location>
        <position position="274"/>
    </location>
    <ligand>
        <name>[4Fe-4S] cluster</name>
        <dbReference type="ChEBI" id="CHEBI:49883"/>
        <label>2</label>
        <note>4Fe-4S-substrate</note>
    </ligand>
</feature>
<accession>B7NA81</accession>
<name>MOAA_ECOLU</name>